<proteinExistence type="inferred from homology"/>
<reference key="1">
    <citation type="journal article" date="2005" name="J. Bacteriol.">
        <title>Insights on evolution of virulence and resistance from the complete genome analysis of an early methicillin-resistant Staphylococcus aureus strain and a biofilm-producing methicillin-resistant Staphylococcus epidermidis strain.</title>
        <authorList>
            <person name="Gill S.R."/>
            <person name="Fouts D.E."/>
            <person name="Archer G.L."/>
            <person name="Mongodin E.F."/>
            <person name="DeBoy R.T."/>
            <person name="Ravel J."/>
            <person name="Paulsen I.T."/>
            <person name="Kolonay J.F."/>
            <person name="Brinkac L.M."/>
            <person name="Beanan M.J."/>
            <person name="Dodson R.J."/>
            <person name="Daugherty S.C."/>
            <person name="Madupu R."/>
            <person name="Angiuoli S.V."/>
            <person name="Durkin A.S."/>
            <person name="Haft D.H."/>
            <person name="Vamathevan J.J."/>
            <person name="Khouri H."/>
            <person name="Utterback T.R."/>
            <person name="Lee C."/>
            <person name="Dimitrov G."/>
            <person name="Jiang L."/>
            <person name="Qin H."/>
            <person name="Weidman J."/>
            <person name="Tran K."/>
            <person name="Kang K.H."/>
            <person name="Hance I.R."/>
            <person name="Nelson K.E."/>
            <person name="Fraser C.M."/>
        </authorList>
    </citation>
    <scope>NUCLEOTIDE SEQUENCE [LARGE SCALE GENOMIC DNA]</scope>
    <source>
        <strain>COL</strain>
    </source>
</reference>
<comment type="subunit">
    <text evidence="1">May form a heterooligomeric complex that consists of seven subunits: mnhA2, mnhB2, mnhC2, mnhD2, mnhE2, mnhF2 and mnhG2.</text>
</comment>
<comment type="subcellular location">
    <subcellularLocation>
        <location evidence="3">Cell membrane</location>
        <topology evidence="3">Multi-pass membrane protein</topology>
    </subcellularLocation>
</comment>
<comment type="similarity">
    <text evidence="3">Belongs to the CPA3 antiporters (TC 2.A.63) subunit G family.</text>
</comment>
<name>MNHG2_STAAC</name>
<feature type="chain" id="PRO_0000372175" description="Putative antiporter subunit mnhG2">
    <location>
        <begin position="1"/>
        <end position="145"/>
    </location>
</feature>
<feature type="transmembrane region" description="Helical" evidence="2">
    <location>
        <begin position="11"/>
        <end position="31"/>
    </location>
</feature>
<feature type="transmembrane region" description="Helical" evidence="2">
    <location>
        <begin position="51"/>
        <end position="71"/>
    </location>
</feature>
<feature type="transmembrane region" description="Helical" evidence="2">
    <location>
        <begin position="72"/>
        <end position="92"/>
    </location>
</feature>
<evidence type="ECO:0000250" key="1"/>
<evidence type="ECO:0000255" key="2"/>
<evidence type="ECO:0000305" key="3"/>
<sequence length="145" mass="16303">MEITKEIFSLIAAVMLLLGSFIALISAIGIVKFQDVFLRSHAATKSSTLSVLLTLIGVLIYFIVNTGFFSVRLLLSLVFINLTSPVGMHLVARAAYRNGAYMYRKNDAHTHASILLSSNEQNSTEALQLRAEKREEHRKKWYQND</sequence>
<accession>Q5HI39</accession>
<protein>
    <recommendedName>
        <fullName>Putative antiporter subunit mnhG2</fullName>
    </recommendedName>
    <alternativeName>
        <fullName>Mrp complex subunit G2</fullName>
    </alternativeName>
    <alternativeName>
        <fullName>Putative NADH-ubiquinone oxidoreductase subunit mnhF2</fullName>
    </alternativeName>
</protein>
<keyword id="KW-0050">Antiport</keyword>
<keyword id="KW-1003">Cell membrane</keyword>
<keyword id="KW-0406">Ion transport</keyword>
<keyword id="KW-0472">Membrane</keyword>
<keyword id="KW-0812">Transmembrane</keyword>
<keyword id="KW-1133">Transmembrane helix</keyword>
<keyword id="KW-0813">Transport</keyword>
<gene>
    <name type="primary">mnhG2</name>
    <name type="synonym">mrpG2</name>
    <name type="ordered locus">SACOL0686</name>
</gene>
<dbReference type="EMBL" id="CP000046">
    <property type="protein sequence ID" value="AAW37750.1"/>
    <property type="molecule type" value="Genomic_DNA"/>
</dbReference>
<dbReference type="RefSeq" id="WP_000406611.1">
    <property type="nucleotide sequence ID" value="NZ_JBGOFO010000005.1"/>
</dbReference>
<dbReference type="SMR" id="Q5HI39"/>
<dbReference type="KEGG" id="sac:SACOL0686"/>
<dbReference type="HOGENOM" id="CLU_121334_0_3_9"/>
<dbReference type="Proteomes" id="UP000000530">
    <property type="component" value="Chromosome"/>
</dbReference>
<dbReference type="GO" id="GO:0005886">
    <property type="term" value="C:plasma membrane"/>
    <property type="evidence" value="ECO:0007669"/>
    <property type="project" value="UniProtKB-SubCell"/>
</dbReference>
<dbReference type="GO" id="GO:0015385">
    <property type="term" value="F:sodium:proton antiporter activity"/>
    <property type="evidence" value="ECO:0007669"/>
    <property type="project" value="TreeGrafter"/>
</dbReference>
<dbReference type="InterPro" id="IPR005133">
    <property type="entry name" value="PhaG_MnhG_YufB"/>
</dbReference>
<dbReference type="NCBIfam" id="TIGR01300">
    <property type="entry name" value="CPA3_mnhG_phaG"/>
    <property type="match status" value="1"/>
</dbReference>
<dbReference type="NCBIfam" id="NF009236">
    <property type="entry name" value="PRK12586.1"/>
    <property type="match status" value="1"/>
</dbReference>
<dbReference type="NCBIfam" id="NF009314">
    <property type="entry name" value="PRK12674.1-2"/>
    <property type="match status" value="1"/>
</dbReference>
<dbReference type="PANTHER" id="PTHR34703">
    <property type="entry name" value="ANTIPORTER SUBUNIT MNHG2-RELATED"/>
    <property type="match status" value="1"/>
</dbReference>
<dbReference type="PANTHER" id="PTHR34703:SF1">
    <property type="entry name" value="ANTIPORTER SUBUNIT MNHG2-RELATED"/>
    <property type="match status" value="1"/>
</dbReference>
<dbReference type="Pfam" id="PF03334">
    <property type="entry name" value="PhaG_MnhG_YufB"/>
    <property type="match status" value="1"/>
</dbReference>
<organism>
    <name type="scientific">Staphylococcus aureus (strain COL)</name>
    <dbReference type="NCBI Taxonomy" id="93062"/>
    <lineage>
        <taxon>Bacteria</taxon>
        <taxon>Bacillati</taxon>
        <taxon>Bacillota</taxon>
        <taxon>Bacilli</taxon>
        <taxon>Bacillales</taxon>
        <taxon>Staphylococcaceae</taxon>
        <taxon>Staphylococcus</taxon>
    </lineage>
</organism>